<feature type="chain" id="PRO_0000115792" description="Tegument protein UL46">
    <location>
        <begin position="1"/>
        <end position="718"/>
    </location>
</feature>
<feature type="region of interest" description="Disordered" evidence="1">
    <location>
        <begin position="433"/>
        <end position="510"/>
    </location>
</feature>
<feature type="region of interest" description="Disordered" evidence="1">
    <location>
        <begin position="581"/>
        <end position="611"/>
    </location>
</feature>
<feature type="compositionally biased region" description="Gly residues" evidence="1">
    <location>
        <begin position="444"/>
        <end position="454"/>
    </location>
</feature>
<feature type="compositionally biased region" description="Basic and acidic residues" evidence="1">
    <location>
        <begin position="455"/>
        <end position="467"/>
    </location>
</feature>
<feature type="sequence variant" description="In strain: 17 syn+.">
    <original>R</original>
    <variation>H</variation>
    <location>
        <position position="3"/>
    </location>
</feature>
<feature type="sequence variant" description="In strain: Nonneuroinvasive mutant HF10.">
    <original>N</original>
    <variation>S</variation>
    <location>
        <position position="411"/>
    </location>
</feature>
<feature type="sequence variant" description="In strain: Nonneuroinvasive mutant HF10.">
    <original>A</original>
    <variation>V</variation>
    <location>
        <position position="510"/>
    </location>
</feature>
<feature type="sequence variant" description="In strain: Nonneuroinvasive mutant HF10.">
    <original>T</original>
    <variation>A</variation>
    <location>
        <position position="513"/>
    </location>
</feature>
<feature type="sequence variant" description="In strain: Nonneuroinvasive mutant HF10.">
    <original>R</original>
    <variation>W</variation>
    <location>
        <position position="631"/>
    </location>
</feature>
<evidence type="ECO:0000256" key="1">
    <source>
        <dbReference type="SAM" id="MobiDB-lite"/>
    </source>
</evidence>
<evidence type="ECO:0000269" key="2">
    <source>
    </source>
</evidence>
<evidence type="ECO:0000269" key="3">
    <source>
    </source>
</evidence>
<evidence type="ECO:0000269" key="4">
    <source>
    </source>
</evidence>
<evidence type="ECO:0000269" key="5">
    <source>
    </source>
</evidence>
<evidence type="ECO:0000269" key="6">
    <source>
    </source>
</evidence>
<evidence type="ECO:0000269" key="7">
    <source>
    </source>
</evidence>
<evidence type="ECO:0000269" key="8">
    <source>
    </source>
</evidence>
<evidence type="ECO:0000269" key="9">
    <source>
    </source>
</evidence>
<evidence type="ECO:0000269" key="10">
    <source>
    </source>
</evidence>
<evidence type="ECO:0000269" key="11">
    <source>
    </source>
</evidence>
<evidence type="ECO:0000269" key="12">
    <source>
    </source>
</evidence>
<evidence type="ECO:0000305" key="13"/>
<name>TEG1_HHV11</name>
<organismHost>
    <name type="scientific">Homo sapiens</name>
    <name type="common">Human</name>
    <dbReference type="NCBI Taxonomy" id="9606"/>
</organismHost>
<accession>P10230</accession>
<accession>B9VQH4</accession>
<accession>O09799</accession>
<accession>Q09I88</accession>
<sequence>MQRRTRGASSLRLARCLTPANLIRGDNAGVPERRIFGGCLLPTPEGLLSAAVGALRQRSDDAQPAFLTCTDRSVRLAARQHNTVPESLIVDGLASDPHYEYIRHYASAATQALGEVELPGGQLSRAILTQYWKYLQTVVPSGLDVPEDPVGDCDPSLHVLLRPTLAPKLLARTPFKSGAVAAKYAATVAGLRDALHRIQQYMFFMRPADPSRPSTDTALRLNELLAYVSVLYRWASWMLWTTDKHVCHRLSPSNRRFLPLGGSPEAPAETFARHLDRGPSGTTGSMQCMALRAAVSDVLGHLTRLANLWQTGKRSGGTYGTVDTVVSTVEVLSIVHHHAQYIINATLTGYGVWATDSLNNEYLRAAVDSQERFCRTTAPLFPTMTAPSWARMELSIKAWFGAALAADLLRNGAPSLHYESILRLVASRRTTWSAGPPPDDMASGPGGHRAGGGTCREKIQRARRDNEPPPLPRPRLHSTPASTRRFRRRRADGAGPPLPDANDPVAEPPAAATQPATYYTHMGEVPPRLPARNVAGPDRRPPAATCPLLVRRASLGSLDRPRVWGPAPEGEPDQMEATYLTADDDDDDARRKATHAASARERHAPYEDDESIYETVSEDGGRVYEEIPWMRVYENVCVNTANAAPASPYIEAENPLYDWGGSALFSPPGRTGPPPPPLSPSPVLARHRANALTNDGPTNVAALSALLTKLKREGRRSR</sequence>
<comment type="function">
    <text evidence="6 7 8 9 10 11 12">Plays a role in the activation of the host PI3K/AKT pathway to promote cell survival. Interacts with and activates host LCK and thereby recruits downstream partners SHC1, GRB2 and PI3KR1 in order to activate the PI3K pathway by phosphorylating host AKT on its activating residues. This mechanism is inhibited by the viral protein US3 that instead promotes incorporation of UL46 into virions. Plays a role in the inhibition of TMEM173/STING-mediated type I interferon production (PubMed:28592536). Interacts with host DOK2 and induces its degradation. This immune evasion mechanism to inactivate T-cells may play an important role during pathogenesis (PubMed:28841444).</text>
</comment>
<comment type="subunit">
    <text evidence="2 7 8 9 11 12">Interacts with VP16. Interacts with host LCK, PIK3R1, SHC1 AND GRB2; these interactions promote the activation of the PI3K/AKT pathway. Interacts with host YWHAB. Interacts with ICP0; this interaction targets UL46 for degradation by the proteasome. Interacts (via N-terminus) with host TMEM173 (PubMed:28592536). Interacts (via C-terminus) with host TBK1 (PubMed:28592536). Interacts with host DOK2 (PubMed:28841444).</text>
</comment>
<comment type="interaction">
    <interactant intactId="EBI-7694458">
        <id>P10230</id>
    </interactant>
    <interactant intactId="EBI-7489933">
        <id>P06492</id>
        <label>UL48</label>
    </interactant>
    <organismsDiffer>false</organismsDiffer>
    <experiments>2</experiments>
</comment>
<comment type="subcellular location">
    <subcellularLocation>
        <location evidence="5">Virion tegument</location>
    </subcellularLocation>
    <subcellularLocation>
        <location evidence="11">Host cytoplasm</location>
    </subcellularLocation>
    <subcellularLocation>
        <location evidence="4">Host cell membrane</location>
        <topology evidence="4">Peripheral membrane protein</topology>
    </subcellularLocation>
</comment>
<comment type="PTM">
    <text evidence="3">Phosphorylated by host LCK. The phosphorylation seems to be lymphocyte-specific.</text>
</comment>
<comment type="similarity">
    <text evidence="13">Belongs to the herpesviridae HHV-1 VP11/12 protein family.</text>
</comment>
<comment type="sequence caution" evidence="13">
    <conflict type="frameshift">
        <sequence resource="EMBL-CDS" id="ABI63507"/>
    </conflict>
</comment>
<gene>
    <name type="ORF">UL46</name>
</gene>
<keyword id="KW-0010">Activator</keyword>
<keyword id="KW-1032">Host cell membrane</keyword>
<keyword id="KW-1035">Host cytoplasm</keyword>
<keyword id="KW-1043">Host membrane</keyword>
<keyword id="KW-0945">Host-virus interaction</keyword>
<keyword id="KW-1090">Inhibition of host innate immune response by virus</keyword>
<keyword id="KW-0472">Membrane</keyword>
<keyword id="KW-0597">Phosphoprotein</keyword>
<keyword id="KW-1185">Reference proteome</keyword>
<keyword id="KW-0804">Transcription</keyword>
<keyword id="KW-0805">Transcription regulation</keyword>
<keyword id="KW-0899">Viral immunoevasion</keyword>
<keyword id="KW-0946">Virion</keyword>
<keyword id="KW-0920">Virion tegument</keyword>
<protein>
    <recommendedName>
        <fullName>Tegument protein UL46</fullName>
    </recommendedName>
    <alternativeName>
        <fullName>Tegument protein VP11/12</fullName>
    </alternativeName>
</protein>
<proteinExistence type="evidence at protein level"/>
<reference key="1">
    <citation type="journal article" date="1988" name="J. Gen. Virol.">
        <title>The complete DNA sequence of the long unique region in the genome of herpes simplex virus type 1.</title>
        <authorList>
            <person name="McGeoch D.J."/>
            <person name="Dalrymple M.A."/>
            <person name="Davison A.J."/>
            <person name="Dolan A."/>
            <person name="Frame M.C."/>
            <person name="McNab D."/>
            <person name="Perry L.J."/>
            <person name="Scott J.E."/>
            <person name="Taylor P."/>
        </authorList>
    </citation>
    <scope>NUCLEOTIDE SEQUENCE [LARGE SCALE GENOMIC DNA]</scope>
</reference>
<reference key="2">
    <citation type="journal article" date="1998" name="J. Virol.">
        <title>The genome sequence of herpes simplex virus type 2.</title>
        <authorList>
            <person name="Dolan A."/>
            <person name="Jamieson F.E."/>
            <person name="Cunningham C."/>
            <person name="Barnett B.C."/>
            <person name="McGeoch D.J."/>
        </authorList>
    </citation>
    <scope>SEQUENCE REVISION TO 170-182</scope>
</reference>
<reference key="3">
    <citation type="journal article" date="2007" name="Microbes Infect.">
        <title>Determination and analysis of the DNA sequence of highly attenuated herpes simplex virus type 1 mutant HF10, a potential oncolytic virus.</title>
        <authorList>
            <person name="Ushijima Y."/>
            <person name="Luo C."/>
            <person name="Goshima F."/>
            <person name="Yamauchi Y."/>
            <person name="Kimura H."/>
            <person name="Nishiyama Y."/>
        </authorList>
    </citation>
    <scope>NUCLEOTIDE SEQUENCE [LARGE SCALE GENOMIC DNA]</scope>
    <source>
        <strain>Nonneuroinvasive mutant HF10</strain>
    </source>
</reference>
<reference key="4">
    <citation type="submission" date="2008-12" db="EMBL/GenBank/DDBJ databases">
        <title>Herpes simplex virus type 1 bacterial artificial chromosome.</title>
        <authorList>
            <person name="Cunningham C."/>
            <person name="Davison A.J."/>
        </authorList>
    </citation>
    <scope>NUCLEOTIDE SEQUENCE [LARGE SCALE GENOMIC DNA]</scope>
    <source>
        <strain>17 syn+</strain>
    </source>
</reference>
<reference key="5">
    <citation type="journal article" date="2005" name="J. Virol.">
        <title>Determination of interactions between tegument proteins of herpes simplex virus type 1.</title>
        <authorList>
            <person name="Vittone V."/>
            <person name="Diefenbach E."/>
            <person name="Triffett D."/>
            <person name="Douglas M.W."/>
            <person name="Cunningham A.L."/>
            <person name="Diefenbach R.J."/>
        </authorList>
    </citation>
    <scope>INTERACTION WITH PROTEIN VP16</scope>
</reference>
<reference key="6">
    <citation type="journal article" date="2008" name="J. Virol.">
        <title>Comprehensive characterization of extracellular herpes simplex virus type 1 virions.</title>
        <authorList>
            <person name="Loret S."/>
            <person name="Guay G."/>
            <person name="Lippe R."/>
        </authorList>
    </citation>
    <scope>SUBCELLULAR LOCATION</scope>
    <source>
        <strain>F</strain>
    </source>
</reference>
<reference key="7">
    <citation type="journal article" date="2008" name="J. Virol.">
        <title>Cell-type-specific tyrosine phosphorylation of the herpes simplex virus tegument protein VP11/12 encoded by gene UL46.</title>
        <authorList>
            <person name="Zahariadis G."/>
            <person name="Wagner M.J."/>
            <person name="Doepker R.C."/>
            <person name="Maciejko J.M."/>
            <person name="Crider C.M."/>
            <person name="Jerome K.R."/>
            <person name="Smiley J.R."/>
        </authorList>
    </citation>
    <scope>PHOSPHORYLATION BY HOST LCK</scope>
</reference>
<reference key="8">
    <citation type="journal article" date="2008" name="Virology">
        <title>The HSV-1 tegument protein pUL46 associates with cellular membranes and viral capsids.</title>
        <authorList>
            <person name="Murphy M.A."/>
            <person name="Bucks M.A."/>
            <person name="O'Regan K.J."/>
            <person name="Courtney R.J."/>
        </authorList>
    </citation>
    <scope>SUBCELLULAR LOCATION</scope>
</reference>
<reference key="9">
    <citation type="journal article" date="2009" name="J. Virol.">
        <title>Herpes simplex virus requires VP11/12 to induce phosphorylation of the activation loop tyrosine (Y394) of the Src family kinase Lck in T lymphocytes.</title>
        <authorList>
            <person name="Wagner M.J."/>
            <person name="Smiley J.R."/>
        </authorList>
    </citation>
    <scope>FUNCTION</scope>
</reference>
<reference key="10">
    <citation type="journal article" date="2011" name="J. Virol.">
        <title>Herpes simplex virus requires VP11/12 to activate Src family kinase-phosphoinositide 3-kinase-Akt signaling.</title>
        <authorList>
            <person name="Wagner M.J."/>
            <person name="Smiley J.R."/>
        </authorList>
    </citation>
    <scope>FUNCTION</scope>
    <scope>INTERACTION WITH HOST PIK3R1</scope>
</reference>
<reference key="11">
    <citation type="journal article" date="2013" name="Mol. Cell. Proteomics">
        <title>A proteomic perspective of inbuilt viral protein regulation: pUL46 tegument protein is targeted for degradation by ICP0 during herpes simplex virus type 1 infection.</title>
        <authorList>
            <person name="Lin A.E."/>
            <person name="Greco T.M."/>
            <person name="Dohner K."/>
            <person name="Sodeik B."/>
            <person name="Cristea I.M."/>
        </authorList>
    </citation>
    <scope>FUNCTION</scope>
    <scope>INTERACTION WITH ICP0 AND HOST YWHAB</scope>
</reference>
<reference key="12">
    <citation type="journal article" date="2013" name="J. Virol.">
        <title>Role of herpes simplex virus VP11/12 tyrosine-based motifs in binding and activation of the Src family kinase Lck and recruitment of p85, Grb2, and Shc.</title>
        <authorList>
            <person name="Strunk U."/>
            <person name="Saffran H.A."/>
            <person name="Wu F.W."/>
            <person name="Smiley J.R."/>
        </authorList>
    </citation>
    <scope>FUNCTION</scope>
    <scope>INTERACTION WITH HOST LCK; PIK3R1; SHC1 AND GRB2</scope>
</reference>
<reference key="13">
    <citation type="journal article" date="2014" name="J. Virol.">
        <title>Herpes simplex virus protein kinases US3 and UL13 modulate VP11/12 phosphorylation, virion packaging, and phosphatidylinositol 3-kinase/Akt signaling activity.</title>
        <authorList>
            <person name="Eaton H.E."/>
            <person name="Saffran H.A."/>
            <person name="Wu F.W."/>
            <person name="Quach K."/>
            <person name="Smiley J.R."/>
        </authorList>
    </citation>
    <scope>FUNCTION</scope>
</reference>
<reference key="14">
    <citation type="journal article" date="2017" name="Virology">
        <title>Herpes simplex virus 1 infection of T cells causes VP11/12-dependent phosphorylation and degradation of the cellular protein Dok-2.</title>
        <authorList>
            <person name="Lahmidi S."/>
            <person name="Strunk U."/>
            <person name="Smiley J.R."/>
            <person name="Pearson A."/>
            <person name="Duplay P."/>
        </authorList>
    </citation>
    <scope>FUNCTION</scope>
    <scope>INTERACTION WITH HOST DOK2</scope>
</reference>
<reference key="15">
    <citation type="journal article" date="2017" name="J. Virol.">
        <title>Evasion of the STING DNA-Sensing Pathway by VP11/12 of Herpes Simplex Virus 1.</title>
        <authorList>
            <person name="Deschamps T."/>
            <person name="Kalamvoki M."/>
        </authorList>
    </citation>
    <scope>FUNCTION</scope>
    <scope>INTERACTION WITH HOST TMEM173 AND TBK1</scope>
    <scope>SUBCELLULAR LOCATION</scope>
</reference>
<organism>
    <name type="scientific">Human herpesvirus 1 (strain 17)</name>
    <name type="common">HHV-1</name>
    <name type="synonym">Human herpes simplex virus 1</name>
    <dbReference type="NCBI Taxonomy" id="10299"/>
    <lineage>
        <taxon>Viruses</taxon>
        <taxon>Duplodnaviria</taxon>
        <taxon>Heunggongvirae</taxon>
        <taxon>Peploviricota</taxon>
        <taxon>Herviviricetes</taxon>
        <taxon>Herpesvirales</taxon>
        <taxon>Orthoherpesviridae</taxon>
        <taxon>Alphaherpesvirinae</taxon>
        <taxon>Simplexvirus</taxon>
        <taxon>Simplexvirus humanalpha1</taxon>
        <taxon>Human herpesvirus 1</taxon>
    </lineage>
</organism>
<dbReference type="EMBL" id="X14112">
    <property type="protein sequence ID" value="CAA32296.1"/>
    <property type="molecule type" value="Genomic_DNA"/>
</dbReference>
<dbReference type="EMBL" id="DQ889502">
    <property type="protein sequence ID" value="ABI63507.1"/>
    <property type="status" value="ALT_FRAME"/>
    <property type="molecule type" value="Genomic_DNA"/>
</dbReference>
<dbReference type="EMBL" id="FJ593289">
    <property type="protein sequence ID" value="ACM62269.1"/>
    <property type="molecule type" value="Genomic_DNA"/>
</dbReference>
<dbReference type="PIR" id="A30089">
    <property type="entry name" value="TNBEF6"/>
</dbReference>
<dbReference type="RefSeq" id="YP_009137121.1">
    <property type="nucleotide sequence ID" value="NC_001806.2"/>
</dbReference>
<dbReference type="BioGRID" id="971441">
    <property type="interactions" value="9"/>
</dbReference>
<dbReference type="IntAct" id="P10230">
    <property type="interactions" value="1"/>
</dbReference>
<dbReference type="MINT" id="P10230"/>
<dbReference type="DNASU" id="2703413"/>
<dbReference type="GeneID" id="2703413"/>
<dbReference type="KEGG" id="vg:2703413"/>
<dbReference type="Proteomes" id="UP000009294">
    <property type="component" value="Segment"/>
</dbReference>
<dbReference type="Proteomes" id="UP000180652">
    <property type="component" value="Segment"/>
</dbReference>
<dbReference type="GO" id="GO:0030430">
    <property type="term" value="C:host cell cytoplasm"/>
    <property type="evidence" value="ECO:0007669"/>
    <property type="project" value="UniProtKB-SubCell"/>
</dbReference>
<dbReference type="GO" id="GO:0020002">
    <property type="term" value="C:host cell plasma membrane"/>
    <property type="evidence" value="ECO:0007669"/>
    <property type="project" value="UniProtKB-SubCell"/>
</dbReference>
<dbReference type="GO" id="GO:0016020">
    <property type="term" value="C:membrane"/>
    <property type="evidence" value="ECO:0007669"/>
    <property type="project" value="UniProtKB-KW"/>
</dbReference>
<dbReference type="GO" id="GO:0019033">
    <property type="term" value="C:viral tegument"/>
    <property type="evidence" value="ECO:0007669"/>
    <property type="project" value="UniProtKB-SubCell"/>
</dbReference>
<dbReference type="GO" id="GO:0006355">
    <property type="term" value="P:regulation of DNA-templated transcription"/>
    <property type="evidence" value="ECO:0007669"/>
    <property type="project" value="InterPro"/>
</dbReference>
<dbReference type="GO" id="GO:0052170">
    <property type="term" value="P:symbiont-mediated suppression of host innate immune response"/>
    <property type="evidence" value="ECO:0007669"/>
    <property type="project" value="UniProtKB-KW"/>
</dbReference>
<dbReference type="InterPro" id="IPR005051">
    <property type="entry name" value="Herpes_UL46"/>
</dbReference>
<dbReference type="Pfam" id="PF03387">
    <property type="entry name" value="Herpes_UL46"/>
    <property type="match status" value="1"/>
</dbReference>